<dbReference type="EMBL" id="L43967">
    <property type="protein sequence ID" value="AAC71524.1"/>
    <property type="molecule type" value="Genomic_DNA"/>
</dbReference>
<dbReference type="PIR" id="D64233">
    <property type="entry name" value="D64233"/>
</dbReference>
<dbReference type="RefSeq" id="WP_010869418.1">
    <property type="nucleotide sequence ID" value="NC_000908.2"/>
</dbReference>
<dbReference type="SMR" id="P47544"/>
<dbReference type="STRING" id="243273.MG_302"/>
<dbReference type="GeneID" id="88282465"/>
<dbReference type="KEGG" id="mge:MG_302"/>
<dbReference type="eggNOG" id="COG0619">
    <property type="taxonomic scope" value="Bacteria"/>
</dbReference>
<dbReference type="HOGENOM" id="CLU_876668_0_0_14"/>
<dbReference type="InParanoid" id="P47544"/>
<dbReference type="OrthoDB" id="8075495at2"/>
<dbReference type="BioCyc" id="MGEN243273:G1GJ2-371-MONOMER"/>
<dbReference type="Proteomes" id="UP000000807">
    <property type="component" value="Chromosome"/>
</dbReference>
<dbReference type="GO" id="GO:0005886">
    <property type="term" value="C:plasma membrane"/>
    <property type="evidence" value="ECO:0000318"/>
    <property type="project" value="GO_Central"/>
</dbReference>
<dbReference type="CDD" id="cd16914">
    <property type="entry name" value="EcfT"/>
    <property type="match status" value="1"/>
</dbReference>
<dbReference type="InterPro" id="IPR003339">
    <property type="entry name" value="ABC/ECF_trnsptr_transmembrane"/>
</dbReference>
<dbReference type="PANTHER" id="PTHR33514">
    <property type="entry name" value="PROTEIN ABCI12, CHLOROPLASTIC"/>
    <property type="match status" value="1"/>
</dbReference>
<dbReference type="PANTHER" id="PTHR33514:SF13">
    <property type="entry name" value="PROTEIN ABCI12, CHLOROPLASTIC"/>
    <property type="match status" value="1"/>
</dbReference>
<dbReference type="Pfam" id="PF02361">
    <property type="entry name" value="CbiQ"/>
    <property type="match status" value="1"/>
</dbReference>
<evidence type="ECO:0000255" key="1"/>
<evidence type="ECO:0000305" key="2"/>
<feature type="chain" id="PRO_0000210522" description="Uncharacterized protein MG302">
    <location>
        <begin position="1"/>
        <end position="317"/>
    </location>
</feature>
<feature type="transmembrane region" description="Helical" evidence="1">
    <location>
        <begin position="18"/>
        <end position="38"/>
    </location>
</feature>
<feature type="transmembrane region" description="Helical" evidence="1">
    <location>
        <begin position="58"/>
        <end position="78"/>
    </location>
</feature>
<feature type="transmembrane region" description="Helical" evidence="1">
    <location>
        <begin position="92"/>
        <end position="112"/>
    </location>
</feature>
<feature type="transmembrane region" description="Helical" evidence="1">
    <location>
        <begin position="130"/>
        <end position="150"/>
    </location>
</feature>
<feature type="transmembrane region" description="Helical" evidence="1">
    <location>
        <begin position="159"/>
        <end position="179"/>
    </location>
</feature>
<feature type="transmembrane region" description="Helical" evidence="1">
    <location>
        <begin position="202"/>
        <end position="222"/>
    </location>
</feature>
<feature type="transmembrane region" description="Helical" evidence="1">
    <location>
        <begin position="252"/>
        <end position="272"/>
    </location>
</feature>
<comment type="subcellular location">
    <subcellularLocation>
        <location evidence="2">Cell membrane</location>
        <topology evidence="2">Multi-pass membrane protein</topology>
    </subcellularLocation>
</comment>
<comment type="similarity">
    <text evidence="2">Belongs to the CbiQ family.</text>
</comment>
<protein>
    <recommendedName>
        <fullName>Uncharacterized protein MG302</fullName>
    </recommendedName>
</protein>
<name>Y302_MYCGE</name>
<proteinExistence type="inferred from homology"/>
<keyword id="KW-1003">Cell membrane</keyword>
<keyword id="KW-0472">Membrane</keyword>
<keyword id="KW-1185">Reference proteome</keyword>
<keyword id="KW-0812">Transmembrane</keyword>
<keyword id="KW-1133">Transmembrane helix</keyword>
<gene>
    <name type="ordered locus">MG302</name>
</gene>
<sequence>MQKTSFLNKIDPLLKLWFWLISLVVAFLPLGLYGLVIINLVFLTLVVISEKRVKSALIILSWMLFFLWFNVIVNGFIFLPNTALSVDQNHNFLGSFIYSGGNNFGGVSWWSFNLRSFLRSFVIALRISMLFSASFLLTTSSSIYELAWAVERFFKFLKLFHIKVQPISILLAVIFKLLPTVKSEIIRIKQAQATRGFIYNKCSFLNPFKIKTLFIPVLLSTVKKTETTAFALQAKGYDLNNTNRTHYPLKYNLLNGVFLLVGLLLFSILLIANNWNLVYWENPNYSFNFDKQNFIFLRAINSNNLLYFWQIELIAIG</sequence>
<organism>
    <name type="scientific">Mycoplasma genitalium (strain ATCC 33530 / DSM 19775 / NCTC 10195 / G37)</name>
    <name type="common">Mycoplasmoides genitalium</name>
    <dbReference type="NCBI Taxonomy" id="243273"/>
    <lineage>
        <taxon>Bacteria</taxon>
        <taxon>Bacillati</taxon>
        <taxon>Mycoplasmatota</taxon>
        <taxon>Mycoplasmoidales</taxon>
        <taxon>Mycoplasmoidaceae</taxon>
        <taxon>Mycoplasmoides</taxon>
    </lineage>
</organism>
<accession>P47544</accession>
<reference key="1">
    <citation type="journal article" date="1995" name="Science">
        <title>The minimal gene complement of Mycoplasma genitalium.</title>
        <authorList>
            <person name="Fraser C.M."/>
            <person name="Gocayne J.D."/>
            <person name="White O."/>
            <person name="Adams M.D."/>
            <person name="Clayton R.A."/>
            <person name="Fleischmann R.D."/>
            <person name="Bult C.J."/>
            <person name="Kerlavage A.R."/>
            <person name="Sutton G.G."/>
            <person name="Kelley J.M."/>
            <person name="Fritchman J.L."/>
            <person name="Weidman J.F."/>
            <person name="Small K.V."/>
            <person name="Sandusky M."/>
            <person name="Fuhrmann J.L."/>
            <person name="Nguyen D.T."/>
            <person name="Utterback T.R."/>
            <person name="Saudek D.M."/>
            <person name="Phillips C.A."/>
            <person name="Merrick J.M."/>
            <person name="Tomb J.-F."/>
            <person name="Dougherty B.A."/>
            <person name="Bott K.F."/>
            <person name="Hu P.-C."/>
            <person name="Lucier T.S."/>
            <person name="Peterson S.N."/>
            <person name="Smith H.O."/>
            <person name="Hutchison C.A. III"/>
            <person name="Venter J.C."/>
        </authorList>
    </citation>
    <scope>NUCLEOTIDE SEQUENCE [LARGE SCALE GENOMIC DNA]</scope>
    <source>
        <strain>ATCC 33530 / DSM 19775 / NCTC 10195 / G37</strain>
    </source>
</reference>